<protein>
    <recommendedName>
        <fullName evidence="1">tRNA modification GTPase MnmE</fullName>
        <ecNumber evidence="1">3.6.-.-</ecNumber>
    </recommendedName>
</protein>
<reference key="1">
    <citation type="journal article" date="2007" name="PLoS ONE">
        <title>A glimpse of streptococcal toxic shock syndrome from comparative genomics of S. suis 2 Chinese isolates.</title>
        <authorList>
            <person name="Chen C."/>
            <person name="Tang J."/>
            <person name="Dong W."/>
            <person name="Wang C."/>
            <person name="Feng Y."/>
            <person name="Wang J."/>
            <person name="Zheng F."/>
            <person name="Pan X."/>
            <person name="Liu D."/>
            <person name="Li M."/>
            <person name="Song Y."/>
            <person name="Zhu X."/>
            <person name="Sun H."/>
            <person name="Feng T."/>
            <person name="Guo Z."/>
            <person name="Ju A."/>
            <person name="Ge J."/>
            <person name="Dong Y."/>
            <person name="Sun W."/>
            <person name="Jiang Y."/>
            <person name="Wang J."/>
            <person name="Yan J."/>
            <person name="Yang H."/>
            <person name="Wang X."/>
            <person name="Gao G.F."/>
            <person name="Yang R."/>
            <person name="Wang J."/>
            <person name="Yu J."/>
        </authorList>
    </citation>
    <scope>NUCLEOTIDE SEQUENCE [LARGE SCALE GENOMIC DNA]</scope>
    <source>
        <strain>98HAH33</strain>
    </source>
</reference>
<proteinExistence type="inferred from homology"/>
<sequence>MITKEFDTIAAISTPLGEGAIGIVRLSGTDAFAIASTVFKGKDLATVPSHSLNYGHAIDPATGQVLDEVMIGAMRSPKTFTREDVIEINTHGGIAVTNEILQLLIRQGARMAEPGEFTKRAFLNGRVDLTQAEAVMDVIRAKTDKAMHNAVRQLDGSLSQLINDTRQEILNTLAQVEVNIDYPEYDDVEEATTELVREKTLQFQALLENLLRTARRGKILREGIATAIIGRPNVGKSSLLNNLLREEKAIVTDIAGTTRDVIEEYVNIKGVPLKLIDTAGIRETDDIVEKIGVERSKKALEEADLILLVLNASEPLTEQDRNLLAISDMANRIVLLNKTDLEEQIEVDQLPEDVIRISVLQNQNIDQIEEKINQLFFENAGLVEQDATYLSNSRHISLIEQAVQSLHAVNDGLKVGMPVDLLQVDLTRCWQILGEITGDAAPDELITQLFSQFCLGK</sequence>
<comment type="function">
    <text evidence="1">Exhibits a very high intrinsic GTPase hydrolysis rate. Involved in the addition of a carboxymethylaminomethyl (cmnm) group at the wobble position (U34) of certain tRNAs, forming tRNA-cmnm(5)s(2)U34.</text>
</comment>
<comment type="cofactor">
    <cofactor evidence="1">
        <name>K(+)</name>
        <dbReference type="ChEBI" id="CHEBI:29103"/>
    </cofactor>
    <text evidence="1">Binds 1 potassium ion per subunit.</text>
</comment>
<comment type="subunit">
    <text evidence="1">Homodimer. Heterotetramer of two MnmE and two MnmG subunits.</text>
</comment>
<comment type="subcellular location">
    <subcellularLocation>
        <location evidence="1">Cytoplasm</location>
    </subcellularLocation>
</comment>
<comment type="similarity">
    <text evidence="1">Belongs to the TRAFAC class TrmE-Era-EngA-EngB-Septin-like GTPase superfamily. TrmE GTPase family.</text>
</comment>
<gene>
    <name evidence="1" type="primary">mnmE</name>
    <name evidence="1" type="synonym">trmE</name>
    <name type="ordered locus">SSU98_1467</name>
</gene>
<accession>A4W2N6</accession>
<feature type="chain" id="PRO_1000048892" description="tRNA modification GTPase MnmE">
    <location>
        <begin position="1"/>
        <end position="457"/>
    </location>
</feature>
<feature type="domain" description="TrmE-type G">
    <location>
        <begin position="223"/>
        <end position="377"/>
    </location>
</feature>
<feature type="binding site" evidence="1">
    <location>
        <position position="25"/>
    </location>
    <ligand>
        <name>(6S)-5-formyl-5,6,7,8-tetrahydrofolate</name>
        <dbReference type="ChEBI" id="CHEBI:57457"/>
    </ligand>
</feature>
<feature type="binding site" evidence="1">
    <location>
        <position position="87"/>
    </location>
    <ligand>
        <name>(6S)-5-formyl-5,6,7,8-tetrahydrofolate</name>
        <dbReference type="ChEBI" id="CHEBI:57457"/>
    </ligand>
</feature>
<feature type="binding site" evidence="1">
    <location>
        <position position="126"/>
    </location>
    <ligand>
        <name>(6S)-5-formyl-5,6,7,8-tetrahydrofolate</name>
        <dbReference type="ChEBI" id="CHEBI:57457"/>
    </ligand>
</feature>
<feature type="binding site" evidence="1">
    <location>
        <begin position="233"/>
        <end position="238"/>
    </location>
    <ligand>
        <name>GTP</name>
        <dbReference type="ChEBI" id="CHEBI:37565"/>
    </ligand>
</feature>
<feature type="binding site" evidence="1">
    <location>
        <position position="233"/>
    </location>
    <ligand>
        <name>K(+)</name>
        <dbReference type="ChEBI" id="CHEBI:29103"/>
    </ligand>
</feature>
<feature type="binding site" evidence="1">
    <location>
        <position position="237"/>
    </location>
    <ligand>
        <name>Mg(2+)</name>
        <dbReference type="ChEBI" id="CHEBI:18420"/>
    </ligand>
</feature>
<feature type="binding site" evidence="1">
    <location>
        <begin position="252"/>
        <end position="258"/>
    </location>
    <ligand>
        <name>GTP</name>
        <dbReference type="ChEBI" id="CHEBI:37565"/>
    </ligand>
</feature>
<feature type="binding site" evidence="1">
    <location>
        <position position="252"/>
    </location>
    <ligand>
        <name>K(+)</name>
        <dbReference type="ChEBI" id="CHEBI:29103"/>
    </ligand>
</feature>
<feature type="binding site" evidence="1">
    <location>
        <position position="254"/>
    </location>
    <ligand>
        <name>K(+)</name>
        <dbReference type="ChEBI" id="CHEBI:29103"/>
    </ligand>
</feature>
<feature type="binding site" evidence="1">
    <location>
        <position position="257"/>
    </location>
    <ligand>
        <name>K(+)</name>
        <dbReference type="ChEBI" id="CHEBI:29103"/>
    </ligand>
</feature>
<feature type="binding site" evidence="1">
    <location>
        <position position="258"/>
    </location>
    <ligand>
        <name>Mg(2+)</name>
        <dbReference type="ChEBI" id="CHEBI:18420"/>
    </ligand>
</feature>
<feature type="binding site" evidence="1">
    <location>
        <begin position="277"/>
        <end position="280"/>
    </location>
    <ligand>
        <name>GTP</name>
        <dbReference type="ChEBI" id="CHEBI:37565"/>
    </ligand>
</feature>
<feature type="binding site" evidence="1">
    <location>
        <position position="457"/>
    </location>
    <ligand>
        <name>(6S)-5-formyl-5,6,7,8-tetrahydrofolate</name>
        <dbReference type="ChEBI" id="CHEBI:57457"/>
    </ligand>
</feature>
<name>MNME_STRS2</name>
<organism>
    <name type="scientific">Streptococcus suis (strain 98HAH33)</name>
    <dbReference type="NCBI Taxonomy" id="391296"/>
    <lineage>
        <taxon>Bacteria</taxon>
        <taxon>Bacillati</taxon>
        <taxon>Bacillota</taxon>
        <taxon>Bacilli</taxon>
        <taxon>Lactobacillales</taxon>
        <taxon>Streptococcaceae</taxon>
        <taxon>Streptococcus</taxon>
    </lineage>
</organism>
<evidence type="ECO:0000255" key="1">
    <source>
        <dbReference type="HAMAP-Rule" id="MF_00379"/>
    </source>
</evidence>
<keyword id="KW-0963">Cytoplasm</keyword>
<keyword id="KW-0342">GTP-binding</keyword>
<keyword id="KW-0378">Hydrolase</keyword>
<keyword id="KW-0460">Magnesium</keyword>
<keyword id="KW-0479">Metal-binding</keyword>
<keyword id="KW-0547">Nucleotide-binding</keyword>
<keyword id="KW-0630">Potassium</keyword>
<keyword id="KW-0819">tRNA processing</keyword>
<dbReference type="EC" id="3.6.-.-" evidence="1"/>
<dbReference type="EMBL" id="CP000408">
    <property type="protein sequence ID" value="ABP92625.1"/>
    <property type="molecule type" value="Genomic_DNA"/>
</dbReference>
<dbReference type="SMR" id="A4W2N6"/>
<dbReference type="KEGG" id="ssv:SSU98_1467"/>
<dbReference type="HOGENOM" id="CLU_019624_4_1_9"/>
<dbReference type="GO" id="GO:0005829">
    <property type="term" value="C:cytosol"/>
    <property type="evidence" value="ECO:0007669"/>
    <property type="project" value="TreeGrafter"/>
</dbReference>
<dbReference type="GO" id="GO:0005525">
    <property type="term" value="F:GTP binding"/>
    <property type="evidence" value="ECO:0007669"/>
    <property type="project" value="UniProtKB-UniRule"/>
</dbReference>
<dbReference type="GO" id="GO:0003924">
    <property type="term" value="F:GTPase activity"/>
    <property type="evidence" value="ECO:0007669"/>
    <property type="project" value="UniProtKB-UniRule"/>
</dbReference>
<dbReference type="GO" id="GO:0046872">
    <property type="term" value="F:metal ion binding"/>
    <property type="evidence" value="ECO:0007669"/>
    <property type="project" value="UniProtKB-KW"/>
</dbReference>
<dbReference type="GO" id="GO:0030488">
    <property type="term" value="P:tRNA methylation"/>
    <property type="evidence" value="ECO:0007669"/>
    <property type="project" value="TreeGrafter"/>
</dbReference>
<dbReference type="GO" id="GO:0002098">
    <property type="term" value="P:tRNA wobble uridine modification"/>
    <property type="evidence" value="ECO:0007669"/>
    <property type="project" value="TreeGrafter"/>
</dbReference>
<dbReference type="CDD" id="cd04164">
    <property type="entry name" value="trmE"/>
    <property type="match status" value="1"/>
</dbReference>
<dbReference type="CDD" id="cd14858">
    <property type="entry name" value="TrmE_N"/>
    <property type="match status" value="1"/>
</dbReference>
<dbReference type="FunFam" id="3.30.1360.120:FF:000003">
    <property type="entry name" value="tRNA modification GTPase MnmE"/>
    <property type="match status" value="1"/>
</dbReference>
<dbReference type="FunFam" id="3.40.50.300:FF:000494">
    <property type="entry name" value="tRNA modification GTPase MnmE"/>
    <property type="match status" value="1"/>
</dbReference>
<dbReference type="Gene3D" id="3.40.50.300">
    <property type="entry name" value="P-loop containing nucleotide triphosphate hydrolases"/>
    <property type="match status" value="1"/>
</dbReference>
<dbReference type="Gene3D" id="3.30.1360.120">
    <property type="entry name" value="Probable tRNA modification gtpase trme, domain 1"/>
    <property type="match status" value="1"/>
</dbReference>
<dbReference type="Gene3D" id="1.20.120.430">
    <property type="entry name" value="tRNA modification GTPase MnmE domain 2"/>
    <property type="match status" value="1"/>
</dbReference>
<dbReference type="HAMAP" id="MF_00379">
    <property type="entry name" value="GTPase_MnmE"/>
    <property type="match status" value="1"/>
</dbReference>
<dbReference type="InterPro" id="IPR031168">
    <property type="entry name" value="G_TrmE"/>
</dbReference>
<dbReference type="InterPro" id="IPR006073">
    <property type="entry name" value="GTP-bd"/>
</dbReference>
<dbReference type="InterPro" id="IPR018948">
    <property type="entry name" value="GTP-bd_TrmE_N"/>
</dbReference>
<dbReference type="InterPro" id="IPR004520">
    <property type="entry name" value="GTPase_MnmE"/>
</dbReference>
<dbReference type="InterPro" id="IPR027368">
    <property type="entry name" value="MnmE_dom2"/>
</dbReference>
<dbReference type="InterPro" id="IPR025867">
    <property type="entry name" value="MnmE_helical"/>
</dbReference>
<dbReference type="InterPro" id="IPR027417">
    <property type="entry name" value="P-loop_NTPase"/>
</dbReference>
<dbReference type="InterPro" id="IPR005225">
    <property type="entry name" value="Small_GTP-bd"/>
</dbReference>
<dbReference type="InterPro" id="IPR027266">
    <property type="entry name" value="TrmE/GcvT_dom1"/>
</dbReference>
<dbReference type="NCBIfam" id="TIGR00450">
    <property type="entry name" value="mnmE_trmE_thdF"/>
    <property type="match status" value="1"/>
</dbReference>
<dbReference type="NCBIfam" id="NF003661">
    <property type="entry name" value="PRK05291.1-3"/>
    <property type="match status" value="1"/>
</dbReference>
<dbReference type="NCBIfam" id="TIGR00231">
    <property type="entry name" value="small_GTP"/>
    <property type="match status" value="1"/>
</dbReference>
<dbReference type="PANTHER" id="PTHR42714">
    <property type="entry name" value="TRNA MODIFICATION GTPASE GTPBP3"/>
    <property type="match status" value="1"/>
</dbReference>
<dbReference type="PANTHER" id="PTHR42714:SF2">
    <property type="entry name" value="TRNA MODIFICATION GTPASE GTPBP3, MITOCHONDRIAL"/>
    <property type="match status" value="1"/>
</dbReference>
<dbReference type="Pfam" id="PF01926">
    <property type="entry name" value="MMR_HSR1"/>
    <property type="match status" value="1"/>
</dbReference>
<dbReference type="Pfam" id="PF12631">
    <property type="entry name" value="MnmE_helical"/>
    <property type="match status" value="1"/>
</dbReference>
<dbReference type="Pfam" id="PF10396">
    <property type="entry name" value="TrmE_N"/>
    <property type="match status" value="1"/>
</dbReference>
<dbReference type="SUPFAM" id="SSF52540">
    <property type="entry name" value="P-loop containing nucleoside triphosphate hydrolases"/>
    <property type="match status" value="1"/>
</dbReference>
<dbReference type="SUPFAM" id="SSF116878">
    <property type="entry name" value="TrmE connector domain"/>
    <property type="match status" value="1"/>
</dbReference>
<dbReference type="PROSITE" id="PS51709">
    <property type="entry name" value="G_TRME"/>
    <property type="match status" value="1"/>
</dbReference>